<accession>Q837L8</accession>
<proteinExistence type="evidence at protein level"/>
<protein>
    <recommendedName>
        <fullName evidence="4">Hyaluronate lyase HylB</fullName>
        <ecNumber evidence="3">4.2.2.1</ecNumber>
    </recommendedName>
    <alternativeName>
        <fullName evidence="4">Chondroitin lyase</fullName>
        <ecNumber evidence="3">4.2.2.5</ecNumber>
    </alternativeName>
    <alternativeName>
        <fullName evidence="4">Chondroitinase</fullName>
    </alternativeName>
    <alternativeName>
        <fullName evidence="4">Hyaluronidase</fullName>
        <shortName evidence="5">HYase</shortName>
    </alternativeName>
</protein>
<dbReference type="EC" id="4.2.2.1" evidence="3"/>
<dbReference type="EC" id="4.2.2.5" evidence="3"/>
<dbReference type="EMBL" id="AE016830">
    <property type="protein sequence ID" value="AAO80631.1"/>
    <property type="molecule type" value="Genomic_DNA"/>
</dbReference>
<dbReference type="RefSeq" id="NP_814561.1">
    <property type="nucleotide sequence ID" value="NC_004668.1"/>
</dbReference>
<dbReference type="RefSeq" id="WP_002399773.1">
    <property type="nucleotide sequence ID" value="NZ_KE136527.1"/>
</dbReference>
<dbReference type="SMR" id="Q837L8"/>
<dbReference type="STRING" id="226185.EF_0818"/>
<dbReference type="CAZy" id="PL8">
    <property type="family name" value="Polysaccharide Lyase Family 8"/>
</dbReference>
<dbReference type="EnsemblBacteria" id="AAO80631">
    <property type="protein sequence ID" value="AAO80631"/>
    <property type="gene ID" value="EF_0818"/>
</dbReference>
<dbReference type="KEGG" id="efa:EF0818"/>
<dbReference type="PATRIC" id="fig|226185.45.peg.2753"/>
<dbReference type="eggNOG" id="COG5492">
    <property type="taxonomic scope" value="Bacteria"/>
</dbReference>
<dbReference type="HOGENOM" id="CLU_004172_1_0_9"/>
<dbReference type="Proteomes" id="UP000001415">
    <property type="component" value="Chromosome"/>
</dbReference>
<dbReference type="GO" id="GO:0005576">
    <property type="term" value="C:extracellular region"/>
    <property type="evidence" value="ECO:0000305"/>
    <property type="project" value="UniProtKB"/>
</dbReference>
<dbReference type="GO" id="GO:0030246">
    <property type="term" value="F:carbohydrate binding"/>
    <property type="evidence" value="ECO:0007669"/>
    <property type="project" value="InterPro"/>
</dbReference>
<dbReference type="GO" id="GO:0030341">
    <property type="term" value="F:chondroitin AC lyase activity"/>
    <property type="evidence" value="ECO:0000314"/>
    <property type="project" value="UniProtKB"/>
</dbReference>
<dbReference type="GO" id="GO:0030340">
    <property type="term" value="F:hyaluronate lyase activity"/>
    <property type="evidence" value="ECO:0000314"/>
    <property type="project" value="UniProtKB"/>
</dbReference>
<dbReference type="GO" id="GO:0005975">
    <property type="term" value="P:carbohydrate metabolic process"/>
    <property type="evidence" value="ECO:0007669"/>
    <property type="project" value="InterPro"/>
</dbReference>
<dbReference type="GO" id="GO:0030207">
    <property type="term" value="P:chondroitin sulfate proteoglycan catabolic process"/>
    <property type="evidence" value="ECO:0000314"/>
    <property type="project" value="UniProtKB"/>
</dbReference>
<dbReference type="CDD" id="cd01083">
    <property type="entry name" value="GAG_Lyase"/>
    <property type="match status" value="1"/>
</dbReference>
<dbReference type="Gene3D" id="2.70.98.10">
    <property type="match status" value="1"/>
</dbReference>
<dbReference type="Gene3D" id="1.50.10.100">
    <property type="entry name" value="Chondroitin AC/alginate lyase"/>
    <property type="match status" value="1"/>
</dbReference>
<dbReference type="Gene3D" id="2.60.120.560">
    <property type="entry name" value="Exo-inulinase, domain 1"/>
    <property type="match status" value="1"/>
</dbReference>
<dbReference type="Gene3D" id="2.60.220.10">
    <property type="entry name" value="Polysaccharide lyase family 8-like, C-terminal"/>
    <property type="match status" value="1"/>
</dbReference>
<dbReference type="InterPro" id="IPR008929">
    <property type="entry name" value="Chondroitin_lyas"/>
</dbReference>
<dbReference type="InterPro" id="IPR011013">
    <property type="entry name" value="Gal_mutarotase_sf_dom"/>
</dbReference>
<dbReference type="InterPro" id="IPR014718">
    <property type="entry name" value="GH-type_carb-bd"/>
</dbReference>
<dbReference type="InterPro" id="IPR038970">
    <property type="entry name" value="Lyase_8"/>
</dbReference>
<dbReference type="InterPro" id="IPR011071">
    <property type="entry name" value="Lyase_8-like_C"/>
</dbReference>
<dbReference type="InterPro" id="IPR012970">
    <property type="entry name" value="Lyase_8_alpha_N"/>
</dbReference>
<dbReference type="InterPro" id="IPR004103">
    <property type="entry name" value="Lyase_8_C"/>
</dbReference>
<dbReference type="InterPro" id="IPR003159">
    <property type="entry name" value="Lyase_8_central_dom"/>
</dbReference>
<dbReference type="PANTHER" id="PTHR38481">
    <property type="entry name" value="HYALURONATE LYASE"/>
    <property type="match status" value="1"/>
</dbReference>
<dbReference type="PANTHER" id="PTHR38481:SF1">
    <property type="entry name" value="HYALURONATE LYASE"/>
    <property type="match status" value="1"/>
</dbReference>
<dbReference type="Pfam" id="PF02278">
    <property type="entry name" value="Lyase_8"/>
    <property type="match status" value="1"/>
</dbReference>
<dbReference type="Pfam" id="PF02884">
    <property type="entry name" value="Lyase_8_C"/>
    <property type="match status" value="1"/>
</dbReference>
<dbReference type="Pfam" id="PF08124">
    <property type="entry name" value="Lyase_8_N"/>
    <property type="match status" value="1"/>
</dbReference>
<dbReference type="SUPFAM" id="SSF48230">
    <property type="entry name" value="Chondroitin AC/alginate lyase"/>
    <property type="match status" value="1"/>
</dbReference>
<dbReference type="SUPFAM" id="SSF74650">
    <property type="entry name" value="Galactose mutarotase-like"/>
    <property type="match status" value="1"/>
</dbReference>
<dbReference type="SUPFAM" id="SSF49863">
    <property type="entry name" value="Hyaluronate lyase-like, C-terminal domain"/>
    <property type="match status" value="1"/>
</dbReference>
<name>HYLB_ENTFA</name>
<keyword id="KW-0456">Lyase</keyword>
<keyword id="KW-1185">Reference proteome</keyword>
<keyword id="KW-0964">Secreted</keyword>
<keyword id="KW-0732">Signal</keyword>
<keyword id="KW-0843">Virulence</keyword>
<organism evidence="7 8">
    <name type="scientific">Enterococcus faecalis (strain ATCC 700802 / V583)</name>
    <dbReference type="NCBI Taxonomy" id="226185"/>
    <lineage>
        <taxon>Bacteria</taxon>
        <taxon>Bacillati</taxon>
        <taxon>Bacillota</taxon>
        <taxon>Bacilli</taxon>
        <taxon>Lactobacillales</taxon>
        <taxon>Enterococcaceae</taxon>
        <taxon>Enterococcus</taxon>
    </lineage>
</organism>
<gene>
    <name evidence="4" type="primary">hylB</name>
    <name evidence="4 7" type="ordered locus">EF_0818</name>
</gene>
<reference evidence="7 8" key="1">
    <citation type="journal article" date="2003" name="Science">
        <title>Role of mobile DNA in the evolution of vancomycin-resistant Enterococcus faecalis.</title>
        <authorList>
            <person name="Paulsen I.T."/>
            <person name="Banerjei L."/>
            <person name="Myers G.S.A."/>
            <person name="Nelson K.E."/>
            <person name="Seshadri R."/>
            <person name="Read T.D."/>
            <person name="Fouts D.E."/>
            <person name="Eisen J.A."/>
            <person name="Gill S.R."/>
            <person name="Heidelberg J.F."/>
            <person name="Tettelin H."/>
            <person name="Dodson R.J."/>
            <person name="Umayam L.A."/>
            <person name="Brinkac L.M."/>
            <person name="Beanan M.J."/>
            <person name="Daugherty S.C."/>
            <person name="DeBoy R.T."/>
            <person name="Durkin S.A."/>
            <person name="Kolonay J.F."/>
            <person name="Madupu R."/>
            <person name="Nelson W.C."/>
            <person name="Vamathevan J.J."/>
            <person name="Tran B."/>
            <person name="Upton J."/>
            <person name="Hansen T."/>
            <person name="Shetty J."/>
            <person name="Khouri H.M."/>
            <person name="Utterback T.R."/>
            <person name="Radune D."/>
            <person name="Ketchum K.A."/>
            <person name="Dougherty B.A."/>
            <person name="Fraser C.M."/>
        </authorList>
    </citation>
    <scope>NUCLEOTIDE SEQUENCE [LARGE SCALE GENOMIC DNA]</scope>
    <source>
        <strain evidence="8">ATCC 700802 / V583</strain>
    </source>
</reference>
<reference key="2">
    <citation type="journal article" date="2024" name="Infect. Immun.">
        <title>Function and contribution of two putative Enterococcus faecalis glycosaminoglycan degrading enzymes to bacteremia and catheter-associated urinary tract infection.</title>
        <authorList>
            <person name="Johnson A.O."/>
            <person name="Shipman B.M."/>
            <person name="Hunt B.C."/>
            <person name="Learman B.S."/>
            <person name="Brauer A.L."/>
            <person name="Zhou S.P."/>
            <person name="Hageman Blair R."/>
            <person name="De Nisco N.J."/>
            <person name="Armbruster C.E."/>
        </authorList>
    </citation>
    <scope>FUNCTION</scope>
    <scope>CATALYTIC ACTIVITY</scope>
    <scope>SUBCELLULAR LOCATION</scope>
    <scope>INDUCTION</scope>
    <scope>DISRUPTION PHENOTYPE</scope>
    <source>
        <strain evidence="4">V587</strain>
    </source>
</reference>
<feature type="signal peptide" evidence="1">
    <location>
        <begin position="1"/>
        <end position="29"/>
    </location>
</feature>
<feature type="chain" id="PRO_5038440634" description="Hyaluronate lyase HylB" evidence="1">
    <location>
        <begin position="30"/>
        <end position="1004"/>
    </location>
</feature>
<feature type="active site" evidence="2">
    <location>
        <position position="468"/>
    </location>
</feature>
<feature type="active site" evidence="2">
    <location>
        <position position="477"/>
    </location>
</feature>
<feature type="active site" evidence="2">
    <location>
        <position position="531"/>
    </location>
</feature>
<comment type="function">
    <text evidence="3">Degrades hyaluronic acid (HA) and chondroitin sulfate (CS) A in vitro. Is not active against heparin sodium salt (HS). Involved in the pathogenesis of vancomycin-resistant E.faecalis infections. Contributes to attenuation of the lipopolysaccharide (LPS)-mediated nuclear factor (NF)-kappa-B activation assayed in the mouse RAW-Blue reporter macrophages.</text>
</comment>
<comment type="catalytic activity">
    <reaction evidence="3">
        <text>[hyaluronan](n) = n 3-(4-deoxy-beta-D-gluc-4-enuronosyl)-N-acetyl-D-glucosamine + H2O</text>
        <dbReference type="Rhea" id="RHEA:50240"/>
        <dbReference type="Rhea" id="RHEA-COMP:12583"/>
        <dbReference type="ChEBI" id="CHEBI:15377"/>
        <dbReference type="ChEBI" id="CHEBI:132151"/>
        <dbReference type="ChEBI" id="CHEBI:132153"/>
        <dbReference type="EC" id="4.2.2.1"/>
    </reaction>
</comment>
<comment type="catalytic activity">
    <reaction evidence="3">
        <text>Eliminative degradation of polysaccharides containing 1,4-beta-D-hexosaminyl and 1,3-beta-D-glucuronosyl linkages to disaccharides containing 4-deoxy-beta-D-gluc-4-enuronosyl groups.</text>
        <dbReference type="EC" id="4.2.2.5"/>
    </reaction>
</comment>
<comment type="subcellular location">
    <subcellularLocation>
        <location evidence="6">Secreted</location>
    </subcellularLocation>
</comment>
<comment type="induction">
    <text evidence="3">Expression is up-regulated by 5 kDa hyaluronic acid (HA) in vancomycin-resistant strain V587 cultured in human urine.</text>
</comment>
<comment type="disruption phenotype">
    <text evidence="3">Deletion of the gene in vancomycin-resistant strain V587 leads to significant defect in kidney colonization in the mouse model of catheter-associated urinary tract infection (CAUTI). Double deletion of hylA and hylB genes in the same strain leads to a significant colonization defect in both the kidneys and the spleen in the mouse model of bacteremia.</text>
</comment>
<comment type="similarity">
    <text evidence="5">Belongs to the polysaccharide lyase 8 family.</text>
</comment>
<evidence type="ECO:0000255" key="1"/>
<evidence type="ECO:0000255" key="2">
    <source>
        <dbReference type="PIRSR" id="PIRSR638970-1"/>
    </source>
</evidence>
<evidence type="ECO:0000269" key="3">
    <source>
    </source>
</evidence>
<evidence type="ECO:0000303" key="4">
    <source>
    </source>
</evidence>
<evidence type="ECO:0000305" key="5"/>
<evidence type="ECO:0000305" key="6">
    <source>
    </source>
</evidence>
<evidence type="ECO:0000312" key="7">
    <source>
        <dbReference type="EMBL" id="AAO80631.1"/>
    </source>
</evidence>
<evidence type="ECO:0000312" key="8">
    <source>
        <dbReference type="Proteomes" id="UP000001415"/>
    </source>
</evidence>
<sequence>MKNRKIWVMLVGLFTALTNGFMGTTLTFAEENEASQTIEQPSYISDFPNQVGHWQDLVGTAEKKNDSAGLWIANTKQGTNLESVSINLDAREQSSGDLELTFLYEGQSNFGLVFRGDKQKTSQWQSFAYNRDGRWQLGQPGGKWLTNIPGPTLLSGQQYKLLVRYDGKKIQTFLNDQLFYENEEVHYPDGTSINDDWMGAVGIRLFGNLSKLNIISMKSGPVGSIPVIDSSAEYRELKEKWRNQLVSKEYDSTNQALVDYVQKISNEATELDQTMNKEPNRSYLWPLEPGNTPSADLTTQFTKLQKLALAYGTKGSTLYQDDKLAATIIDGLDFMVTQKGYDGKKYHGNWWDWQIGVPQKFLNILMILEDKVSPEKQQIYTNALSSYVPDPFKQLYTKPQGTFVDLAFIPNFVTSGANRTDLALTVLGLGILQKDSGKINQASSSIVDVFKLVTKGDGFYQDGSFIQHNNIPYTGSYGNVLVKGVGQILAITADSSFQMDATLVTEFVENVDRAFLPLIYKGEMLPTVNGRSISRAPAVGKTGYGSTTMYNLLIVAKFAPNNYQKKFQEAVKYWMKENPDYYLTNARDFNDLQMTMQLLTNPEITGGQLPFTGTKLYASMDRFVQRTPSYMFGLGLYSKRTASFEAGNKENKRGWHTGDGMMYVYNDDEVQFNSSYWPTVDPYRLPGTTVDTISLADEVSAFTTITSKEQWVGGVTSDNQAVVGMALNKDGTKNNGKLLPMNLQAKKSWFVLNGQIIALGAGIKGDTEASIETVVDNRLLNDAYQYQVLSNIGEIHEKNETSKKQWLLLKSDHSNANMGYYFPEETTVNVKSETRKGTYKAINEAFPSDKEYVGDYRTFTIQHGQHPTNEHYAYVVLPGIDETDLKTYAAKKTVEVLSNTEEIQAVKQEEEGYLGVNIWSETGGTIAGITSNKAISLMRKTQQHQKTYTFSDPTQTTKTLTLKIPKDYSTVISQSDGITYDDATETFTINFENAAGSSKQIIVE</sequence>